<sequence length="715" mass="81379">MSLELEWMSIDDLKLPSNVIDIIKNRGIKKLNPPQTEAVKKGLLDGNRLLLTSPTGSGKTLIAEMGIISFLLKNGGKAIYVTPLRALTNEKYLTFKDWESIGFKVAMTSGDYDTDDAWLKNYDIIITTYEKLDSLWRHRPDWLNEANYFVLDELHYLNDPERGPVVESVTIRAKRRNLLALSATISNYKQIAKWLGAEPVATNWRPVPLMEGVMYPERKKKEYTILFRDNTTRKVHGDDAIIAYTLDSLSKNGQVLVFRNSRKMAESTALKIANYMNFVSLDEKAISEILNQLDDIEEGGSDEKELLKSLISKGVAYHHAGLSKALRDIIEESFRKRKIKVIVATPTLAAGVNLPARTVIIGDIYRFNRKIVGYYDEIPVMEYKQMSGRAGRPGFDQIGESIIVVRDKEDVDRVFKKYILSDVEPIESKLGSERAFYTFLLGILSAEGSLSEKQLEGFAYESLLAKSLVDVYFDRAIRWLSEHSFIREENNTFTLTNFGKRVADLYINPFTADIIRKGLEGHKASCEIAYLHLLAFTPDGPLVSVGRNEEEELIELLEDLECELLVEEPYEEDEYSLYLNALKVALIMKDWIDEVDEDTILGKYNIGSGDLRNIVETMDWLTYSAYHLSKELRLDDHSDKLRILNLRVTDGVKEELLELVQIGGVGRKRARLLYNNGIKGLGDVVMNPDRVRNLLGQKLGERVVQEAARLLNRFH</sequence>
<reference key="1">
    <citation type="journal article" date="2011" name="J. Bacteriol.">
        <title>Genome analyses of icelandic strains of Sulfolobus islandicus, model organisms for genetic and virus-host interaction studies.</title>
        <authorList>
            <person name="Guo L."/>
            <person name="Brugger K."/>
            <person name="Liu C."/>
            <person name="Shah S.A."/>
            <person name="Zheng H."/>
            <person name="Zhu Y."/>
            <person name="Wang S."/>
            <person name="Lillestol R.K."/>
            <person name="Chen L."/>
            <person name="Frank J."/>
            <person name="Prangishvili D."/>
            <person name="Paulin L."/>
            <person name="She Q."/>
            <person name="Huang L."/>
            <person name="Garrett R.A."/>
        </authorList>
    </citation>
    <scope>NUCLEOTIDE SEQUENCE [LARGE SCALE GENOMIC DNA]</scope>
    <source>
        <strain>REY15A</strain>
    </source>
</reference>
<reference key="2">
    <citation type="journal article" date="2012" name="DNA Repair">
        <title>Dissection of the functional domains of an archaeal Holliday junction helicase.</title>
        <authorList>
            <person name="Hong Y."/>
            <person name="Chu M."/>
            <person name="Li Y."/>
            <person name="Ni J."/>
            <person name="Sheng D."/>
            <person name="Hou G."/>
            <person name="She Q."/>
            <person name="Shen Y."/>
        </authorList>
    </citation>
    <scope>DISRUPTION PHENOTYPE</scope>
    <source>
        <strain>REY15A / E233S</strain>
    </source>
</reference>
<reference key="3">
    <citation type="journal article" date="2013" name="Biochem. Soc. Trans.">
        <title>Genetic manipulation in Sulfolobus islandicus and functional analysis of DNA repair genes.</title>
        <authorList>
            <person name="Zhang C."/>
            <person name="Tian B."/>
            <person name="Li S."/>
            <person name="Ao X."/>
            <person name="Dalgaard K."/>
            <person name="Gokce S."/>
            <person name="Liang Y."/>
            <person name="She Q."/>
        </authorList>
    </citation>
    <scope>DISRUPTION PHENOTYPE</scope>
    <source>
        <strain>REY15A</strain>
    </source>
</reference>
<reference key="4">
    <citation type="journal article" date="2018" name="Nucleic Acids Res.">
        <title>The archaeal ATPase PINA interacts with the helicase Hjm via its carboxyl terminal KH domain remodeling and processing replication fork and Holliday junction.</title>
        <authorList>
            <person name="Zhai B."/>
            <person name="DuPrez K."/>
            <person name="Han X."/>
            <person name="Yuan Z."/>
            <person name="Ahmad S."/>
            <person name="Xu C."/>
            <person name="Gu L."/>
            <person name="Ni J."/>
            <person name="Fan L."/>
            <person name="Shen Y."/>
        </authorList>
    </citation>
    <scope>FUNCTION</scope>
    <scope>CATALYTIC ACTIVITY</scope>
    <scope>ACTIVITY REGULATION</scope>
    <scope>SUBUNIT</scope>
    <scope>INTERACTION WITH PINA</scope>
    <scope>IDENTIFICATION BY MASS SPECTROMETRY</scope>
    <source>
        <strain>REY15A / E233S</strain>
    </source>
</reference>
<gene>
    <name evidence="1" type="primary">hel308</name>
    <name evidence="5" type="synonym">hjm</name>
    <name type="ordered locus">SiRe_0250</name>
</gene>
<dbReference type="EC" id="5.6.2.3" evidence="4"/>
<dbReference type="EC" id="5.6.2.4" evidence="1 4"/>
<dbReference type="EMBL" id="CP002425">
    <property type="protein sequence ID" value="ADX84345.1"/>
    <property type="molecule type" value="Genomic_DNA"/>
</dbReference>
<dbReference type="RefSeq" id="WP_014511885.1">
    <property type="nucleotide sequence ID" value="NC_017276.1"/>
</dbReference>
<dbReference type="SMR" id="F0NDL2"/>
<dbReference type="STRING" id="930945.SiRe_0250"/>
<dbReference type="GeneID" id="78427295"/>
<dbReference type="KEGG" id="sir:SiRe_0250"/>
<dbReference type="eggNOG" id="arCOG00553">
    <property type="taxonomic scope" value="Archaea"/>
</dbReference>
<dbReference type="HOGENOM" id="CLU_006553_3_0_2"/>
<dbReference type="Proteomes" id="UP000002664">
    <property type="component" value="Chromosome"/>
</dbReference>
<dbReference type="GO" id="GO:0043138">
    <property type="term" value="F:3'-5' DNA helicase activity"/>
    <property type="evidence" value="ECO:0007669"/>
    <property type="project" value="UniProtKB-UniRule"/>
</dbReference>
<dbReference type="GO" id="GO:0005524">
    <property type="term" value="F:ATP binding"/>
    <property type="evidence" value="ECO:0007669"/>
    <property type="project" value="UniProtKB-UniRule"/>
</dbReference>
<dbReference type="GO" id="GO:0016887">
    <property type="term" value="F:ATP hydrolysis activity"/>
    <property type="evidence" value="ECO:0007669"/>
    <property type="project" value="RHEA"/>
</dbReference>
<dbReference type="GO" id="GO:0003677">
    <property type="term" value="F:DNA binding"/>
    <property type="evidence" value="ECO:0007669"/>
    <property type="project" value="UniProtKB-UniRule"/>
</dbReference>
<dbReference type="GO" id="GO:0006281">
    <property type="term" value="P:DNA repair"/>
    <property type="evidence" value="ECO:0007669"/>
    <property type="project" value="UniProtKB-UniRule"/>
</dbReference>
<dbReference type="CDD" id="cd18028">
    <property type="entry name" value="DEXHc_archSki2"/>
    <property type="match status" value="1"/>
</dbReference>
<dbReference type="CDD" id="cd18795">
    <property type="entry name" value="SF2_C_Ski2"/>
    <property type="match status" value="1"/>
</dbReference>
<dbReference type="Gene3D" id="1.10.3380.30">
    <property type="match status" value="1"/>
</dbReference>
<dbReference type="Gene3D" id="1.10.150.20">
    <property type="entry name" value="5' to 3' exonuclease, C-terminal subdomain"/>
    <property type="match status" value="1"/>
</dbReference>
<dbReference type="Gene3D" id="3.40.50.300">
    <property type="entry name" value="P-loop containing nucleotide triphosphate hydrolases"/>
    <property type="match status" value="2"/>
</dbReference>
<dbReference type="HAMAP" id="MF_00442">
    <property type="entry name" value="Helicase_Hel308"/>
    <property type="match status" value="1"/>
</dbReference>
<dbReference type="InterPro" id="IPR011545">
    <property type="entry name" value="DEAD/DEAH_box_helicase_dom"/>
</dbReference>
<dbReference type="InterPro" id="IPR048772">
    <property type="entry name" value="Hel308-like_dom4"/>
</dbReference>
<dbReference type="InterPro" id="IPR053416">
    <property type="entry name" value="Hel308_helicase"/>
</dbReference>
<dbReference type="InterPro" id="IPR050474">
    <property type="entry name" value="Hel308_SKI2-like"/>
</dbReference>
<dbReference type="InterPro" id="IPR014001">
    <property type="entry name" value="Helicase_ATP-bd"/>
</dbReference>
<dbReference type="InterPro" id="IPR001650">
    <property type="entry name" value="Helicase_C-like"/>
</dbReference>
<dbReference type="InterPro" id="IPR022965">
    <property type="entry name" value="Helicase_Hel308"/>
</dbReference>
<dbReference type="InterPro" id="IPR027417">
    <property type="entry name" value="P-loop_NTPase"/>
</dbReference>
<dbReference type="InterPro" id="IPR036390">
    <property type="entry name" value="WH_DNA-bd_sf"/>
</dbReference>
<dbReference type="NCBIfam" id="NF040935">
    <property type="entry name" value="helicase_Hel308"/>
    <property type="match status" value="1"/>
</dbReference>
<dbReference type="PANTHER" id="PTHR47961:SF10">
    <property type="entry name" value="ATP-DEPENDENT DNA HELICASE HEL308"/>
    <property type="match status" value="1"/>
</dbReference>
<dbReference type="PANTHER" id="PTHR47961">
    <property type="entry name" value="DNA POLYMERASE THETA, PUTATIVE (AFU_ORTHOLOGUE AFUA_1G05260)-RELATED"/>
    <property type="match status" value="1"/>
</dbReference>
<dbReference type="Pfam" id="PF00270">
    <property type="entry name" value="DEAD"/>
    <property type="match status" value="1"/>
</dbReference>
<dbReference type="Pfam" id="PF00271">
    <property type="entry name" value="Helicase_C"/>
    <property type="match status" value="1"/>
</dbReference>
<dbReference type="Pfam" id="PF21280">
    <property type="entry name" value="Helicase_dom4_arc"/>
    <property type="match status" value="1"/>
</dbReference>
<dbReference type="SMART" id="SM00487">
    <property type="entry name" value="DEXDc"/>
    <property type="match status" value="1"/>
</dbReference>
<dbReference type="SMART" id="SM00490">
    <property type="entry name" value="HELICc"/>
    <property type="match status" value="1"/>
</dbReference>
<dbReference type="SUPFAM" id="SSF52540">
    <property type="entry name" value="P-loop containing nucleoside triphosphate hydrolases"/>
    <property type="match status" value="1"/>
</dbReference>
<dbReference type="SUPFAM" id="SSF158702">
    <property type="entry name" value="Sec63 N-terminal domain-like"/>
    <property type="match status" value="1"/>
</dbReference>
<dbReference type="SUPFAM" id="SSF46785">
    <property type="entry name" value="Winged helix' DNA-binding domain"/>
    <property type="match status" value="1"/>
</dbReference>
<dbReference type="PROSITE" id="PS51192">
    <property type="entry name" value="HELICASE_ATP_BIND_1"/>
    <property type="match status" value="1"/>
</dbReference>
<dbReference type="PROSITE" id="PS51194">
    <property type="entry name" value="HELICASE_CTER"/>
    <property type="match status" value="1"/>
</dbReference>
<dbReference type="PROSITE" id="PS51195">
    <property type="entry name" value="Q_MOTIF"/>
    <property type="match status" value="1"/>
</dbReference>
<comment type="function">
    <text evidence="1 4">DNA-dependent ATPase and 3'-5' DNA helicase that may be involved in repair of stalled replication forks.</text>
</comment>
<comment type="function">
    <text evidence="4">Has predominantly 3'-5' helicase activity but also a weak 5'-3' helicase activity (PubMed:29846688). Has the ability to unwind replication forks, preferentially removing the lagging strand (PubMed:29846688). Hjc, Hjm (Hel308) and branch migration ATPase PINA coordinate HJ migration and cleavage of replication forks in a coordinated way (PubMed:29846688).</text>
</comment>
<comment type="catalytic activity">
    <reaction evidence="1 4">
        <text>Couples ATP hydrolysis with the unwinding of duplex DNA by translocating in the 3'-5' direction.</text>
        <dbReference type="EC" id="5.6.2.4"/>
    </reaction>
</comment>
<comment type="catalytic activity">
    <reaction evidence="1 4">
        <text>ATP + H2O = ADP + phosphate + H(+)</text>
        <dbReference type="Rhea" id="RHEA:13065"/>
        <dbReference type="ChEBI" id="CHEBI:15377"/>
        <dbReference type="ChEBI" id="CHEBI:15378"/>
        <dbReference type="ChEBI" id="CHEBI:30616"/>
        <dbReference type="ChEBI" id="CHEBI:43474"/>
        <dbReference type="ChEBI" id="CHEBI:456216"/>
        <dbReference type="EC" id="5.6.2.4"/>
    </reaction>
</comment>
<comment type="catalytic activity">
    <reaction evidence="4">
        <text>Couples ATP hydrolysis with the unwinding of duplex DNA at the replication fork by translocating in the 5'-3' direction. This creates two antiparallel DNA single strands (ssDNA). The leading ssDNA polymer is the template for DNA polymerase III holoenzyme which synthesizes a continuous strand.</text>
        <dbReference type="EC" id="5.6.2.3"/>
    </reaction>
</comment>
<comment type="catalytic activity">
    <reaction evidence="4">
        <text>ATP + H2O = ADP + phosphate + H(+)</text>
        <dbReference type="Rhea" id="RHEA:13065"/>
        <dbReference type="ChEBI" id="CHEBI:15377"/>
        <dbReference type="ChEBI" id="CHEBI:15378"/>
        <dbReference type="ChEBI" id="CHEBI:30616"/>
        <dbReference type="ChEBI" id="CHEBI:43474"/>
        <dbReference type="ChEBI" id="CHEBI:456216"/>
        <dbReference type="EC" id="5.6.2.3"/>
    </reaction>
</comment>
<comment type="activity regulation">
    <text evidence="4">PINA inhibits the (weak) 5'-3' but not the 3'-5' helicase activity of this protein on overhang substrates (PubMed:29846688).</text>
</comment>
<comment type="subunit">
    <text evidence="4 7">Monomer (Probable). Interacts with PINA ATPase which decreases both DNA helicase activities of this protein (PubMed:29846688).</text>
</comment>
<comment type="disruption phenotype">
    <text evidence="2 3">Essential, it cannot be disrupted.</text>
</comment>
<comment type="similarity">
    <text evidence="1">Belongs to the helicase family. Hel308 subfamily.</text>
</comment>
<keyword id="KW-0067">ATP-binding</keyword>
<keyword id="KW-0227">DNA damage</keyword>
<keyword id="KW-0234">DNA repair</keyword>
<keyword id="KW-0238">DNA-binding</keyword>
<keyword id="KW-0347">Helicase</keyword>
<keyword id="KW-0378">Hydrolase</keyword>
<keyword id="KW-0413">Isomerase</keyword>
<keyword id="KW-0547">Nucleotide-binding</keyword>
<evidence type="ECO:0000255" key="1">
    <source>
        <dbReference type="HAMAP-Rule" id="MF_00442"/>
    </source>
</evidence>
<evidence type="ECO:0000269" key="2">
    <source>
    </source>
</evidence>
<evidence type="ECO:0000269" key="3">
    <source>
    </source>
</evidence>
<evidence type="ECO:0000269" key="4">
    <source>
    </source>
</evidence>
<evidence type="ECO:0000303" key="5">
    <source>
    </source>
</evidence>
<evidence type="ECO:0000303" key="6">
    <source>
    </source>
</evidence>
<evidence type="ECO:0000305" key="7">
    <source>
    </source>
</evidence>
<protein>
    <recommendedName>
        <fullName evidence="1">ATP-dependent DNA helicase Hel308</fullName>
        <ecNumber evidence="4">5.6.2.3</ecNumber>
        <ecNumber evidence="1 4">5.6.2.4</ecNumber>
    </recommendedName>
    <alternativeName>
        <fullName evidence="1">DNA 3'-5' helicase Hel308</fullName>
    </alternativeName>
    <alternativeName>
        <fullName evidence="6">Helicase Hjm</fullName>
    </alternativeName>
</protein>
<accession>F0NDL2</accession>
<name>HELS_SACI5</name>
<feature type="chain" id="PRO_0000429030" description="ATP-dependent DNA helicase Hel308">
    <location>
        <begin position="1"/>
        <end position="715"/>
    </location>
</feature>
<feature type="domain" description="Helicase ATP-binding" evidence="1">
    <location>
        <begin position="40"/>
        <end position="203"/>
    </location>
</feature>
<feature type="domain" description="Helicase C-terminal" evidence="1">
    <location>
        <begin position="236"/>
        <end position="442"/>
    </location>
</feature>
<feature type="short sequence motif" description="DEAH box" evidence="1">
    <location>
        <begin position="152"/>
        <end position="155"/>
    </location>
</feature>
<feature type="binding site" evidence="1">
    <location>
        <position position="35"/>
    </location>
    <ligand>
        <name>ATP</name>
        <dbReference type="ChEBI" id="CHEBI:30616"/>
    </ligand>
</feature>
<feature type="binding site" evidence="1">
    <location>
        <begin position="53"/>
        <end position="60"/>
    </location>
    <ligand>
        <name>ATP</name>
        <dbReference type="ChEBI" id="CHEBI:30616"/>
    </ligand>
</feature>
<organism>
    <name type="scientific">Saccharolobus islandicus (strain REY15A)</name>
    <name type="common">Sulfolobus islandicus</name>
    <dbReference type="NCBI Taxonomy" id="930945"/>
    <lineage>
        <taxon>Archaea</taxon>
        <taxon>Thermoproteota</taxon>
        <taxon>Thermoprotei</taxon>
        <taxon>Sulfolobales</taxon>
        <taxon>Sulfolobaceae</taxon>
        <taxon>Saccharolobus</taxon>
    </lineage>
</organism>
<proteinExistence type="evidence at protein level"/>